<sequence>MVKVYAPASSANMSVGFDVLGAAVIPVDGALLGDVVTVEAAETFGLNNLGRFADKLPSEPRENIVYQCWERFCQELGKQIPVAMTLEKNMPIGSGLGSSACSVVAALMAMNEHCGKPLNDTRLLALMGELEGRISGSIHYDNVAPCFLGGMQLMIEENDIISQQVPGFDEWLWVLAYPGIKVSTAEARAILPAQYRRQDCIAHGRHLAGFIHACYSRQPELAAKLMKDVIAEPYRERLLPGFRQARQAVAEIGAVASGISGSGPTLFALCDKPDTAQRVADWLGKNYLQNQEGFVHICRLDTAGARVLEN</sequence>
<protein>
    <recommendedName>
        <fullName evidence="1">Homoserine kinase</fullName>
        <shortName evidence="1">HK</shortName>
        <shortName evidence="1">HSK</shortName>
        <ecNumber evidence="1">2.7.1.39</ecNumber>
    </recommendedName>
</protein>
<keyword id="KW-0028">Amino-acid biosynthesis</keyword>
<keyword id="KW-0067">ATP-binding</keyword>
<keyword id="KW-0963">Cytoplasm</keyword>
<keyword id="KW-0418">Kinase</keyword>
<keyword id="KW-0547">Nucleotide-binding</keyword>
<keyword id="KW-0791">Threonine biosynthesis</keyword>
<keyword id="KW-0808">Transferase</keyword>
<feature type="chain" id="PRO_1000122422" description="Homoserine kinase">
    <location>
        <begin position="1"/>
        <end position="310"/>
    </location>
</feature>
<feature type="binding site" evidence="1">
    <location>
        <begin position="91"/>
        <end position="101"/>
    </location>
    <ligand>
        <name>ATP</name>
        <dbReference type="ChEBI" id="CHEBI:30616"/>
    </ligand>
</feature>
<reference key="1">
    <citation type="journal article" date="2008" name="DNA Res.">
        <title>Complete genome sequence and comparative analysis of the wild-type commensal Escherichia coli strain SE11 isolated from a healthy adult.</title>
        <authorList>
            <person name="Oshima K."/>
            <person name="Toh H."/>
            <person name="Ogura Y."/>
            <person name="Sasamoto H."/>
            <person name="Morita H."/>
            <person name="Park S.-H."/>
            <person name="Ooka T."/>
            <person name="Iyoda S."/>
            <person name="Taylor T.D."/>
            <person name="Hayashi T."/>
            <person name="Itoh K."/>
            <person name="Hattori M."/>
        </authorList>
    </citation>
    <scope>NUCLEOTIDE SEQUENCE [LARGE SCALE GENOMIC DNA]</scope>
    <source>
        <strain>SE11</strain>
    </source>
</reference>
<comment type="function">
    <text evidence="1">Catalyzes the ATP-dependent phosphorylation of L-homoserine to L-homoserine phosphate.</text>
</comment>
<comment type="catalytic activity">
    <reaction evidence="1">
        <text>L-homoserine + ATP = O-phospho-L-homoserine + ADP + H(+)</text>
        <dbReference type="Rhea" id="RHEA:13985"/>
        <dbReference type="ChEBI" id="CHEBI:15378"/>
        <dbReference type="ChEBI" id="CHEBI:30616"/>
        <dbReference type="ChEBI" id="CHEBI:57476"/>
        <dbReference type="ChEBI" id="CHEBI:57590"/>
        <dbReference type="ChEBI" id="CHEBI:456216"/>
        <dbReference type="EC" id="2.7.1.39"/>
    </reaction>
</comment>
<comment type="pathway">
    <text evidence="1">Amino-acid biosynthesis; L-threonine biosynthesis; L-threonine from L-aspartate: step 4/5.</text>
</comment>
<comment type="subcellular location">
    <subcellularLocation>
        <location evidence="1">Cytoplasm</location>
    </subcellularLocation>
</comment>
<comment type="similarity">
    <text evidence="1">Belongs to the GHMP kinase family. Homoserine kinase subfamily.</text>
</comment>
<name>KHSE_ECOSE</name>
<organism>
    <name type="scientific">Escherichia coli (strain SE11)</name>
    <dbReference type="NCBI Taxonomy" id="409438"/>
    <lineage>
        <taxon>Bacteria</taxon>
        <taxon>Pseudomonadati</taxon>
        <taxon>Pseudomonadota</taxon>
        <taxon>Gammaproteobacteria</taxon>
        <taxon>Enterobacterales</taxon>
        <taxon>Enterobacteriaceae</taxon>
        <taxon>Escherichia</taxon>
    </lineage>
</organism>
<accession>B6HZ00</accession>
<gene>
    <name evidence="1" type="primary">thrB</name>
    <name type="ordered locus">ECSE_0003</name>
</gene>
<proteinExistence type="inferred from homology"/>
<dbReference type="EC" id="2.7.1.39" evidence="1"/>
<dbReference type="EMBL" id="AP009240">
    <property type="protein sequence ID" value="BAG75527.1"/>
    <property type="molecule type" value="Genomic_DNA"/>
</dbReference>
<dbReference type="RefSeq" id="WP_000241644.1">
    <property type="nucleotide sequence ID" value="NC_011415.1"/>
</dbReference>
<dbReference type="SMR" id="B6HZ00"/>
<dbReference type="KEGG" id="ecy:ECSE_0003"/>
<dbReference type="HOGENOM" id="CLU_041243_1_1_6"/>
<dbReference type="UniPathway" id="UPA00050">
    <property type="reaction ID" value="UER00064"/>
</dbReference>
<dbReference type="Proteomes" id="UP000008199">
    <property type="component" value="Chromosome"/>
</dbReference>
<dbReference type="GO" id="GO:0005737">
    <property type="term" value="C:cytoplasm"/>
    <property type="evidence" value="ECO:0007669"/>
    <property type="project" value="UniProtKB-SubCell"/>
</dbReference>
<dbReference type="GO" id="GO:0005524">
    <property type="term" value="F:ATP binding"/>
    <property type="evidence" value="ECO:0007669"/>
    <property type="project" value="UniProtKB-UniRule"/>
</dbReference>
<dbReference type="GO" id="GO:0004413">
    <property type="term" value="F:homoserine kinase activity"/>
    <property type="evidence" value="ECO:0007669"/>
    <property type="project" value="UniProtKB-UniRule"/>
</dbReference>
<dbReference type="GO" id="GO:0009088">
    <property type="term" value="P:threonine biosynthetic process"/>
    <property type="evidence" value="ECO:0007669"/>
    <property type="project" value="UniProtKB-UniRule"/>
</dbReference>
<dbReference type="FunFam" id="3.30.230.10:FF:000020">
    <property type="entry name" value="Homoserine kinase"/>
    <property type="match status" value="1"/>
</dbReference>
<dbReference type="FunFam" id="3.30.70.890:FF:000002">
    <property type="entry name" value="Homoserine kinase"/>
    <property type="match status" value="1"/>
</dbReference>
<dbReference type="Gene3D" id="3.30.230.10">
    <property type="match status" value="1"/>
</dbReference>
<dbReference type="Gene3D" id="3.30.70.890">
    <property type="entry name" value="GHMP kinase, C-terminal domain"/>
    <property type="match status" value="1"/>
</dbReference>
<dbReference type="HAMAP" id="MF_00384">
    <property type="entry name" value="Homoser_kinase"/>
    <property type="match status" value="1"/>
</dbReference>
<dbReference type="InterPro" id="IPR013750">
    <property type="entry name" value="GHMP_kinase_C_dom"/>
</dbReference>
<dbReference type="InterPro" id="IPR036554">
    <property type="entry name" value="GHMP_kinase_C_sf"/>
</dbReference>
<dbReference type="InterPro" id="IPR006204">
    <property type="entry name" value="GHMP_kinase_N_dom"/>
</dbReference>
<dbReference type="InterPro" id="IPR006203">
    <property type="entry name" value="GHMP_knse_ATP-bd_CS"/>
</dbReference>
<dbReference type="InterPro" id="IPR000870">
    <property type="entry name" value="Homoserine_kinase"/>
</dbReference>
<dbReference type="InterPro" id="IPR020568">
    <property type="entry name" value="Ribosomal_Su5_D2-typ_SF"/>
</dbReference>
<dbReference type="InterPro" id="IPR014721">
    <property type="entry name" value="Ribsml_uS5_D2-typ_fold_subgr"/>
</dbReference>
<dbReference type="NCBIfam" id="NF002288">
    <property type="entry name" value="PRK01212.1-4"/>
    <property type="match status" value="1"/>
</dbReference>
<dbReference type="NCBIfam" id="TIGR00191">
    <property type="entry name" value="thrB"/>
    <property type="match status" value="1"/>
</dbReference>
<dbReference type="PANTHER" id="PTHR20861:SF1">
    <property type="entry name" value="HOMOSERINE KINASE"/>
    <property type="match status" value="1"/>
</dbReference>
<dbReference type="PANTHER" id="PTHR20861">
    <property type="entry name" value="HOMOSERINE/4-DIPHOSPHOCYTIDYL-2-C-METHYL-D-ERYTHRITOL KINASE"/>
    <property type="match status" value="1"/>
</dbReference>
<dbReference type="Pfam" id="PF08544">
    <property type="entry name" value="GHMP_kinases_C"/>
    <property type="match status" value="1"/>
</dbReference>
<dbReference type="Pfam" id="PF00288">
    <property type="entry name" value="GHMP_kinases_N"/>
    <property type="match status" value="1"/>
</dbReference>
<dbReference type="PIRSF" id="PIRSF000676">
    <property type="entry name" value="Homoser_kin"/>
    <property type="match status" value="1"/>
</dbReference>
<dbReference type="PRINTS" id="PR00958">
    <property type="entry name" value="HOMSERKINASE"/>
</dbReference>
<dbReference type="SUPFAM" id="SSF55060">
    <property type="entry name" value="GHMP Kinase, C-terminal domain"/>
    <property type="match status" value="1"/>
</dbReference>
<dbReference type="SUPFAM" id="SSF54211">
    <property type="entry name" value="Ribosomal protein S5 domain 2-like"/>
    <property type="match status" value="1"/>
</dbReference>
<dbReference type="PROSITE" id="PS00627">
    <property type="entry name" value="GHMP_KINASES_ATP"/>
    <property type="match status" value="1"/>
</dbReference>
<evidence type="ECO:0000255" key="1">
    <source>
        <dbReference type="HAMAP-Rule" id="MF_00384"/>
    </source>
</evidence>